<accession>P49273</accession>
<dbReference type="EMBL" id="U37044">
    <property type="protein sequence ID" value="AAA80264.1"/>
    <property type="molecule type" value="mRNA"/>
</dbReference>
<dbReference type="PDB" id="3H4Z">
    <property type="method" value="X-ray"/>
    <property type="resolution" value="2.35 A"/>
    <property type="chains" value="A/B/C=17-215"/>
</dbReference>
<dbReference type="PDBsum" id="3H4Z"/>
<dbReference type="SMR" id="P49273"/>
<dbReference type="Allergome" id="321">
    <property type="allergen name" value="Der p 7"/>
</dbReference>
<dbReference type="Allergome" id="3268">
    <property type="allergen name" value="Der p 7.0101"/>
</dbReference>
<dbReference type="GlyCosmos" id="P49273">
    <property type="glycosylation" value="1 site, No reported glycans"/>
</dbReference>
<dbReference type="ABCD" id="P49273">
    <property type="antibodies" value="1 sequenced antibody"/>
</dbReference>
<dbReference type="InParanoid" id="P49273"/>
<dbReference type="OrthoDB" id="6419576at2759"/>
<dbReference type="BRENDA" id="3.4.22.65">
    <property type="organism ID" value="1873"/>
</dbReference>
<dbReference type="EvolutionaryTrace" id="P49273"/>
<dbReference type="Proteomes" id="UP000515146">
    <property type="component" value="Unplaced"/>
</dbReference>
<dbReference type="GO" id="GO:0005576">
    <property type="term" value="C:extracellular region"/>
    <property type="evidence" value="ECO:0007669"/>
    <property type="project" value="UniProtKB-SubCell"/>
</dbReference>
<dbReference type="Gene3D" id="3.15.10.50">
    <property type="match status" value="1"/>
</dbReference>
<dbReference type="InterPro" id="IPR038602">
    <property type="entry name" value="Mite_allergen_7_sf"/>
</dbReference>
<dbReference type="InterPro" id="IPR020234">
    <property type="entry name" value="Mite_allergen_group-7"/>
</dbReference>
<dbReference type="Pfam" id="PF16984">
    <property type="entry name" value="Grp7_allergen"/>
    <property type="match status" value="1"/>
</dbReference>
<name>ALL7_DERPT</name>
<sequence>MMKLLLIAAAAFVAVSADPIHYDKITEEINKAVDEAVAAIEKSETFDPMKVPDHSDKFERHIGIIDLKGELDMRNIQVRGLKQMKRVGDANVKSEDGVVKAHLLVGVHDDVVSMEYDLAYKLGDLHPNTHVISDIQDFVVELSLEVSEEGNMTLTSFEVRQFANVVNHIGGLSILDPIFAVLSDVLTAIFQDTVRAEMTKVLAPAFKKELERNNQ</sequence>
<keyword id="KW-0002">3D-structure</keyword>
<keyword id="KW-0020">Allergen</keyword>
<keyword id="KW-0325">Glycoprotein</keyword>
<keyword id="KW-1185">Reference proteome</keyword>
<keyword id="KW-0964">Secreted</keyword>
<keyword id="KW-0732">Signal</keyword>
<organism>
    <name type="scientific">Dermatophagoides pteronyssinus</name>
    <name type="common">European house dust mite</name>
    <dbReference type="NCBI Taxonomy" id="6956"/>
    <lineage>
        <taxon>Eukaryota</taxon>
        <taxon>Metazoa</taxon>
        <taxon>Ecdysozoa</taxon>
        <taxon>Arthropoda</taxon>
        <taxon>Chelicerata</taxon>
        <taxon>Arachnida</taxon>
        <taxon>Acari</taxon>
        <taxon>Acariformes</taxon>
        <taxon>Sarcoptiformes</taxon>
        <taxon>Astigmata</taxon>
        <taxon>Psoroptidia</taxon>
        <taxon>Analgoidea</taxon>
        <taxon>Pyroglyphidae</taxon>
        <taxon>Dermatophagoidinae</taxon>
        <taxon>Dermatophagoides</taxon>
    </lineage>
</organism>
<protein>
    <recommendedName>
        <fullName>Mite allergen Der p 7</fullName>
    </recommendedName>
    <alternativeName>
        <fullName>Allergen Der p VII</fullName>
    </alternativeName>
    <allergenName>Der p 7</allergenName>
</protein>
<gene>
    <name type="primary">DERP7</name>
</gene>
<comment type="subcellular location">
    <subcellularLocation>
        <location>Secreted</location>
    </subcellularLocation>
</comment>
<comment type="allergen">
    <text>Causes an allergic reaction in human. Common symptoms of mite allergy are bronchial asthma, allergic rhinitis and conjunctivitis.</text>
</comment>
<comment type="similarity">
    <text evidence="2">Belongs to the mite group 7 allergen family.</text>
</comment>
<reference key="1">
    <citation type="journal article" date="1993" name="Clin. Exp. Allergy">
        <title>Molecular cloning of a house dust mite allergen with common antibody binding specificities with multiple components in mite extracts.</title>
        <authorList>
            <person name="Shen H.-D."/>
            <person name="Chua K.-Y."/>
            <person name="Lin K.-L."/>
            <person name="Hsieh K.-H."/>
            <person name="Thomas W.R."/>
        </authorList>
    </citation>
    <scope>NUCLEOTIDE SEQUENCE [MRNA]</scope>
</reference>
<proteinExistence type="evidence at protein level"/>
<feature type="signal peptide" evidence="1">
    <location>
        <begin position="1"/>
        <end position="17"/>
    </location>
</feature>
<feature type="chain" id="PRO_0000001185" description="Mite allergen Der p 7">
    <location>
        <begin position="18"/>
        <end position="215"/>
    </location>
</feature>
<feature type="glycosylation site" description="N-linked (GlcNAc...) asparagine" evidence="1">
    <location>
        <position position="151"/>
    </location>
</feature>
<feature type="helix" evidence="3">
    <location>
        <begin position="22"/>
        <end position="42"/>
    </location>
</feature>
<feature type="turn" evidence="3">
    <location>
        <begin position="45"/>
        <end position="48"/>
    </location>
</feature>
<feature type="strand" evidence="3">
    <location>
        <begin position="49"/>
        <end position="51"/>
    </location>
</feature>
<feature type="strand" evidence="3">
    <location>
        <begin position="54"/>
        <end position="59"/>
    </location>
</feature>
<feature type="strand" evidence="3">
    <location>
        <begin position="63"/>
        <end position="65"/>
    </location>
</feature>
<feature type="strand" evidence="3">
    <location>
        <begin position="68"/>
        <end position="79"/>
    </location>
</feature>
<feature type="helix" evidence="3">
    <location>
        <begin position="81"/>
        <end position="83"/>
    </location>
</feature>
<feature type="strand" evidence="3">
    <location>
        <begin position="91"/>
        <end position="95"/>
    </location>
</feature>
<feature type="strand" evidence="3">
    <location>
        <begin position="98"/>
        <end position="107"/>
    </location>
</feature>
<feature type="strand" evidence="3">
    <location>
        <begin position="112"/>
        <end position="120"/>
    </location>
</feature>
<feature type="strand" evidence="3">
    <location>
        <begin position="128"/>
        <end position="146"/>
    </location>
</feature>
<feature type="strand" evidence="3">
    <location>
        <begin position="152"/>
        <end position="159"/>
    </location>
</feature>
<feature type="strand" evidence="3">
    <location>
        <begin position="165"/>
        <end position="169"/>
    </location>
</feature>
<feature type="helix" evidence="3">
    <location>
        <begin position="177"/>
        <end position="188"/>
    </location>
</feature>
<feature type="turn" evidence="3">
    <location>
        <begin position="189"/>
        <end position="192"/>
    </location>
</feature>
<feature type="helix" evidence="3">
    <location>
        <begin position="193"/>
        <end position="210"/>
    </location>
</feature>
<feature type="turn" evidence="3">
    <location>
        <begin position="211"/>
        <end position="214"/>
    </location>
</feature>
<evidence type="ECO:0000255" key="1"/>
<evidence type="ECO:0000305" key="2"/>
<evidence type="ECO:0007829" key="3">
    <source>
        <dbReference type="PDB" id="3H4Z"/>
    </source>
</evidence>